<gene>
    <name type="primary">yiaF</name>
    <name type="ordered locus">Z4979</name>
    <name type="ordered locus">ECs4439</name>
</gene>
<sequence length="236" mass="25663">MATGKSCSRWFAPLAALLMVVSLSGCFDKEGDQRKAFIDFLQNTVMRSGERLPTLTADQKKQFGPFVSDYAILYGYSQQVNQAMDSGLRPVVDSVNAIRVPQDYVTQSGPLREMNGSLGVLAQQLQNAKLQADAAHSALKQSDDLKPVFDQAFTKVVTTPADALQPLIPAAQTFTQQLVMVGDYIAQQGTQVSFVANGIQFPTSQQASEYNKLIAPLPAQHQAFNQAWTTAVTATQ</sequence>
<dbReference type="EMBL" id="AE005174">
    <property type="protein sequence ID" value="AAG58703.1"/>
    <property type="status" value="ALT_INIT"/>
    <property type="molecule type" value="Genomic_DNA"/>
</dbReference>
<dbReference type="EMBL" id="BA000007">
    <property type="protein sequence ID" value="BAB37862.1"/>
    <property type="status" value="ALT_INIT"/>
    <property type="molecule type" value="Genomic_DNA"/>
</dbReference>
<dbReference type="PIR" id="C86030">
    <property type="entry name" value="C86030"/>
</dbReference>
<dbReference type="PIR" id="G91183">
    <property type="entry name" value="G91183"/>
</dbReference>
<dbReference type="RefSeq" id="NP_312466.2">
    <property type="nucleotide sequence ID" value="NC_002695.1"/>
</dbReference>
<dbReference type="RefSeq" id="WP_000190516.1">
    <property type="nucleotide sequence ID" value="NZ_VOAI01000004.1"/>
</dbReference>
<dbReference type="STRING" id="155864.Z4979"/>
<dbReference type="GeneID" id="915662"/>
<dbReference type="KEGG" id="ece:Z4979"/>
<dbReference type="KEGG" id="ecs:ECs_4439"/>
<dbReference type="PATRIC" id="fig|386585.9.peg.4646"/>
<dbReference type="eggNOG" id="ENOG502ZAGZ">
    <property type="taxonomic scope" value="Bacteria"/>
</dbReference>
<dbReference type="HOGENOM" id="CLU_086363_0_0_6"/>
<dbReference type="OMA" id="KMQADSS"/>
<dbReference type="Proteomes" id="UP000000558">
    <property type="component" value="Chromosome"/>
</dbReference>
<dbReference type="Proteomes" id="UP000002519">
    <property type="component" value="Chromosome"/>
</dbReference>
<dbReference type="InterPro" id="IPR021413">
    <property type="entry name" value="DUF3053"/>
</dbReference>
<dbReference type="Pfam" id="PF11254">
    <property type="entry name" value="DUF3053"/>
    <property type="match status" value="1"/>
</dbReference>
<dbReference type="PROSITE" id="PS51257">
    <property type="entry name" value="PROKAR_LIPOPROTEIN"/>
    <property type="match status" value="1"/>
</dbReference>
<protein>
    <recommendedName>
        <fullName>Uncharacterized protein YiaF</fullName>
    </recommendedName>
</protein>
<keyword id="KW-1185">Reference proteome</keyword>
<accession>P0ADK2</accession>
<accession>P37667</accession>
<name>YIAF_ECO57</name>
<feature type="chain" id="PRO_0000169591" description="Uncharacterized protein YiaF">
    <location>
        <begin position="1"/>
        <end position="236"/>
    </location>
</feature>
<organism>
    <name type="scientific">Escherichia coli O157:H7</name>
    <dbReference type="NCBI Taxonomy" id="83334"/>
    <lineage>
        <taxon>Bacteria</taxon>
        <taxon>Pseudomonadati</taxon>
        <taxon>Pseudomonadota</taxon>
        <taxon>Gammaproteobacteria</taxon>
        <taxon>Enterobacterales</taxon>
        <taxon>Enterobacteriaceae</taxon>
        <taxon>Escherichia</taxon>
    </lineage>
</organism>
<proteinExistence type="predicted"/>
<evidence type="ECO:0000305" key="1"/>
<comment type="sequence caution" evidence="1">
    <conflict type="erroneous initiation">
        <sequence resource="EMBL-CDS" id="AAG58703"/>
    </conflict>
</comment>
<comment type="sequence caution" evidence="1">
    <conflict type="erroneous initiation">
        <sequence resource="EMBL-CDS" id="BAB37862"/>
    </conflict>
</comment>
<reference key="1">
    <citation type="journal article" date="2001" name="Nature">
        <title>Genome sequence of enterohaemorrhagic Escherichia coli O157:H7.</title>
        <authorList>
            <person name="Perna N.T."/>
            <person name="Plunkett G. III"/>
            <person name="Burland V."/>
            <person name="Mau B."/>
            <person name="Glasner J.D."/>
            <person name="Rose D.J."/>
            <person name="Mayhew G.F."/>
            <person name="Evans P.S."/>
            <person name="Gregor J."/>
            <person name="Kirkpatrick H.A."/>
            <person name="Posfai G."/>
            <person name="Hackett J."/>
            <person name="Klink S."/>
            <person name="Boutin A."/>
            <person name="Shao Y."/>
            <person name="Miller L."/>
            <person name="Grotbeck E.J."/>
            <person name="Davis N.W."/>
            <person name="Lim A."/>
            <person name="Dimalanta E.T."/>
            <person name="Potamousis K."/>
            <person name="Apodaca J."/>
            <person name="Anantharaman T.S."/>
            <person name="Lin J."/>
            <person name="Yen G."/>
            <person name="Schwartz D.C."/>
            <person name="Welch R.A."/>
            <person name="Blattner F.R."/>
        </authorList>
    </citation>
    <scope>NUCLEOTIDE SEQUENCE [LARGE SCALE GENOMIC DNA]</scope>
    <source>
        <strain>O157:H7 / EDL933 / ATCC 700927 / EHEC</strain>
    </source>
</reference>
<reference key="2">
    <citation type="journal article" date="2001" name="DNA Res.">
        <title>Complete genome sequence of enterohemorrhagic Escherichia coli O157:H7 and genomic comparison with a laboratory strain K-12.</title>
        <authorList>
            <person name="Hayashi T."/>
            <person name="Makino K."/>
            <person name="Ohnishi M."/>
            <person name="Kurokawa K."/>
            <person name="Ishii K."/>
            <person name="Yokoyama K."/>
            <person name="Han C.-G."/>
            <person name="Ohtsubo E."/>
            <person name="Nakayama K."/>
            <person name="Murata T."/>
            <person name="Tanaka M."/>
            <person name="Tobe T."/>
            <person name="Iida T."/>
            <person name="Takami H."/>
            <person name="Honda T."/>
            <person name="Sasakawa C."/>
            <person name="Ogasawara N."/>
            <person name="Yasunaga T."/>
            <person name="Kuhara S."/>
            <person name="Shiba T."/>
            <person name="Hattori M."/>
            <person name="Shinagawa H."/>
        </authorList>
    </citation>
    <scope>NUCLEOTIDE SEQUENCE [LARGE SCALE GENOMIC DNA]</scope>
    <source>
        <strain>O157:H7 / Sakai / RIMD 0509952 / EHEC</strain>
    </source>
</reference>